<sequence>MSDLEQLERQILEDIAAAVDEQGIEAVRVAALGKKGTVSEKLKTLGGMSPEERQMQGPAINGLKNRVTEALSERRTELRKAAVAARLEREKVDVTLPVRESAASRGRIHPISQVIDEITAIFADMGFSIAEGPDIETDYYNFTALNFPEGHPAREMHDTFFFNPDEKGERKLLRTHTSPVQVHTMEKFAAMRDKEGRDEPIRIVIPGKTYRMDSDATHSPMFHQVEGLVVDKSANVANMKWVLEEFCKAFFEVPSVKMRMRPSFFPFTEPSVEVDIQCDRSGPHVKFGEGNDWLEILGCGMVHPNVLRMSGYDPEVYQGFAWGMGIDRIAMLKYGMPDLRAFFDADVRWIEHYGFRPLDIPTLFGGLSA</sequence>
<protein>
    <recommendedName>
        <fullName evidence="1">Phenylalanine--tRNA ligase alpha subunit</fullName>
        <ecNumber evidence="1">6.1.1.20</ecNumber>
    </recommendedName>
    <alternativeName>
        <fullName evidence="1">Phenylalanyl-tRNA synthetase alpha subunit</fullName>
        <shortName evidence="1">PheRS</shortName>
    </alternativeName>
</protein>
<keyword id="KW-0030">Aminoacyl-tRNA synthetase</keyword>
<keyword id="KW-0067">ATP-binding</keyword>
<keyword id="KW-0963">Cytoplasm</keyword>
<keyword id="KW-0436">Ligase</keyword>
<keyword id="KW-0460">Magnesium</keyword>
<keyword id="KW-0479">Metal-binding</keyword>
<keyword id="KW-0547">Nucleotide-binding</keyword>
<keyword id="KW-0648">Protein biosynthesis</keyword>
<name>SYFA_BRUSI</name>
<comment type="catalytic activity">
    <reaction evidence="1">
        <text>tRNA(Phe) + L-phenylalanine + ATP = L-phenylalanyl-tRNA(Phe) + AMP + diphosphate + H(+)</text>
        <dbReference type="Rhea" id="RHEA:19413"/>
        <dbReference type="Rhea" id="RHEA-COMP:9668"/>
        <dbReference type="Rhea" id="RHEA-COMP:9699"/>
        <dbReference type="ChEBI" id="CHEBI:15378"/>
        <dbReference type="ChEBI" id="CHEBI:30616"/>
        <dbReference type="ChEBI" id="CHEBI:33019"/>
        <dbReference type="ChEBI" id="CHEBI:58095"/>
        <dbReference type="ChEBI" id="CHEBI:78442"/>
        <dbReference type="ChEBI" id="CHEBI:78531"/>
        <dbReference type="ChEBI" id="CHEBI:456215"/>
        <dbReference type="EC" id="6.1.1.20"/>
    </reaction>
</comment>
<comment type="cofactor">
    <cofactor evidence="1">
        <name>Mg(2+)</name>
        <dbReference type="ChEBI" id="CHEBI:18420"/>
    </cofactor>
    <text evidence="1">Binds 2 magnesium ions per tetramer.</text>
</comment>
<comment type="subunit">
    <text evidence="1">Tetramer of two alpha and two beta subunits.</text>
</comment>
<comment type="subcellular location">
    <subcellularLocation>
        <location evidence="1">Cytoplasm</location>
    </subcellularLocation>
</comment>
<comment type="similarity">
    <text evidence="1">Belongs to the class-II aminoacyl-tRNA synthetase family. Phe-tRNA synthetase alpha subunit type 1 subfamily.</text>
</comment>
<organism>
    <name type="scientific">Brucella suis (strain ATCC 23445 / NCTC 10510)</name>
    <dbReference type="NCBI Taxonomy" id="470137"/>
    <lineage>
        <taxon>Bacteria</taxon>
        <taxon>Pseudomonadati</taxon>
        <taxon>Pseudomonadota</taxon>
        <taxon>Alphaproteobacteria</taxon>
        <taxon>Hyphomicrobiales</taxon>
        <taxon>Brucellaceae</taxon>
        <taxon>Brucella/Ochrobactrum group</taxon>
        <taxon>Brucella</taxon>
    </lineage>
</organism>
<accession>B0CJX0</accession>
<gene>
    <name evidence="1" type="primary">pheS</name>
    <name type="ordered locus">BSUIS_A1962</name>
</gene>
<feature type="chain" id="PRO_1000078828" description="Phenylalanine--tRNA ligase alpha subunit">
    <location>
        <begin position="1"/>
        <end position="369"/>
    </location>
</feature>
<feature type="binding site" evidence="1">
    <location>
        <position position="269"/>
    </location>
    <ligand>
        <name>Mg(2+)</name>
        <dbReference type="ChEBI" id="CHEBI:18420"/>
        <note>shared with beta subunit</note>
    </ligand>
</feature>
<dbReference type="EC" id="6.1.1.20" evidence="1"/>
<dbReference type="EMBL" id="CP000911">
    <property type="protein sequence ID" value="ABY38972.1"/>
    <property type="molecule type" value="Genomic_DNA"/>
</dbReference>
<dbReference type="RefSeq" id="WP_002967041.1">
    <property type="nucleotide sequence ID" value="NC_010169.1"/>
</dbReference>
<dbReference type="SMR" id="B0CJX0"/>
<dbReference type="GeneID" id="97534620"/>
<dbReference type="KEGG" id="bmt:BSUIS_A1962"/>
<dbReference type="HOGENOM" id="CLU_025086_0_1_5"/>
<dbReference type="Proteomes" id="UP000008545">
    <property type="component" value="Chromosome I"/>
</dbReference>
<dbReference type="GO" id="GO:0005737">
    <property type="term" value="C:cytoplasm"/>
    <property type="evidence" value="ECO:0007669"/>
    <property type="project" value="UniProtKB-SubCell"/>
</dbReference>
<dbReference type="GO" id="GO:0005524">
    <property type="term" value="F:ATP binding"/>
    <property type="evidence" value="ECO:0007669"/>
    <property type="project" value="UniProtKB-UniRule"/>
</dbReference>
<dbReference type="GO" id="GO:0000287">
    <property type="term" value="F:magnesium ion binding"/>
    <property type="evidence" value="ECO:0007669"/>
    <property type="project" value="UniProtKB-UniRule"/>
</dbReference>
<dbReference type="GO" id="GO:0004826">
    <property type="term" value="F:phenylalanine-tRNA ligase activity"/>
    <property type="evidence" value="ECO:0007669"/>
    <property type="project" value="UniProtKB-UniRule"/>
</dbReference>
<dbReference type="GO" id="GO:0000049">
    <property type="term" value="F:tRNA binding"/>
    <property type="evidence" value="ECO:0007669"/>
    <property type="project" value="InterPro"/>
</dbReference>
<dbReference type="GO" id="GO:0006432">
    <property type="term" value="P:phenylalanyl-tRNA aminoacylation"/>
    <property type="evidence" value="ECO:0007669"/>
    <property type="project" value="UniProtKB-UniRule"/>
</dbReference>
<dbReference type="CDD" id="cd00496">
    <property type="entry name" value="PheRS_alpha_core"/>
    <property type="match status" value="1"/>
</dbReference>
<dbReference type="FunFam" id="3.30.930.10:FF:000003">
    <property type="entry name" value="Phenylalanine--tRNA ligase alpha subunit"/>
    <property type="match status" value="1"/>
</dbReference>
<dbReference type="Gene3D" id="3.30.930.10">
    <property type="entry name" value="Bira Bifunctional Protein, Domain 2"/>
    <property type="match status" value="1"/>
</dbReference>
<dbReference type="HAMAP" id="MF_00281">
    <property type="entry name" value="Phe_tRNA_synth_alpha1"/>
    <property type="match status" value="1"/>
</dbReference>
<dbReference type="InterPro" id="IPR006195">
    <property type="entry name" value="aa-tRNA-synth_II"/>
</dbReference>
<dbReference type="InterPro" id="IPR045864">
    <property type="entry name" value="aa-tRNA-synth_II/BPL/LPL"/>
</dbReference>
<dbReference type="InterPro" id="IPR004529">
    <property type="entry name" value="Phe-tRNA-synth_IIc_asu"/>
</dbReference>
<dbReference type="InterPro" id="IPR004188">
    <property type="entry name" value="Phe-tRNA_ligase_II_N"/>
</dbReference>
<dbReference type="InterPro" id="IPR022911">
    <property type="entry name" value="Phe_tRNA_ligase_alpha1_bac"/>
</dbReference>
<dbReference type="InterPro" id="IPR002319">
    <property type="entry name" value="Phenylalanyl-tRNA_Synthase"/>
</dbReference>
<dbReference type="InterPro" id="IPR010978">
    <property type="entry name" value="tRNA-bd_arm"/>
</dbReference>
<dbReference type="NCBIfam" id="TIGR00468">
    <property type="entry name" value="pheS"/>
    <property type="match status" value="1"/>
</dbReference>
<dbReference type="PANTHER" id="PTHR11538:SF41">
    <property type="entry name" value="PHENYLALANINE--TRNA LIGASE, MITOCHONDRIAL"/>
    <property type="match status" value="1"/>
</dbReference>
<dbReference type="PANTHER" id="PTHR11538">
    <property type="entry name" value="PHENYLALANYL-TRNA SYNTHETASE"/>
    <property type="match status" value="1"/>
</dbReference>
<dbReference type="Pfam" id="PF02912">
    <property type="entry name" value="Phe_tRNA-synt_N"/>
    <property type="match status" value="1"/>
</dbReference>
<dbReference type="Pfam" id="PF01409">
    <property type="entry name" value="tRNA-synt_2d"/>
    <property type="match status" value="1"/>
</dbReference>
<dbReference type="SUPFAM" id="SSF55681">
    <property type="entry name" value="Class II aaRS and biotin synthetases"/>
    <property type="match status" value="1"/>
</dbReference>
<dbReference type="SUPFAM" id="SSF46589">
    <property type="entry name" value="tRNA-binding arm"/>
    <property type="match status" value="1"/>
</dbReference>
<dbReference type="PROSITE" id="PS50862">
    <property type="entry name" value="AA_TRNA_LIGASE_II"/>
    <property type="match status" value="1"/>
</dbReference>
<reference key="1">
    <citation type="submission" date="2007-12" db="EMBL/GenBank/DDBJ databases">
        <title>Brucella suis ATCC 23445 whole genome shotgun sequencing project.</title>
        <authorList>
            <person name="Setubal J.C."/>
            <person name="Bowns C."/>
            <person name="Boyle S."/>
            <person name="Crasta O.R."/>
            <person name="Czar M.J."/>
            <person name="Dharmanolla C."/>
            <person name="Gillespie J.J."/>
            <person name="Kenyon R.W."/>
            <person name="Lu J."/>
            <person name="Mane S."/>
            <person name="Mohapatra S."/>
            <person name="Nagrani S."/>
            <person name="Purkayastha A."/>
            <person name="Rajasimha H.K."/>
            <person name="Shallom J.M."/>
            <person name="Shallom S."/>
            <person name="Shukla M."/>
            <person name="Snyder E.E."/>
            <person name="Sobral B.W."/>
            <person name="Wattam A.R."/>
            <person name="Will R."/>
            <person name="Williams K."/>
            <person name="Yoo H."/>
            <person name="Bruce D."/>
            <person name="Detter C."/>
            <person name="Munk C."/>
            <person name="Brettin T.S."/>
        </authorList>
    </citation>
    <scope>NUCLEOTIDE SEQUENCE [LARGE SCALE GENOMIC DNA]</scope>
    <source>
        <strain>ATCC 23445 / NCTC 10510</strain>
    </source>
</reference>
<proteinExistence type="inferred from homology"/>
<evidence type="ECO:0000255" key="1">
    <source>
        <dbReference type="HAMAP-Rule" id="MF_00281"/>
    </source>
</evidence>